<dbReference type="EC" id="6.3.3.1" evidence="1"/>
<dbReference type="EMBL" id="CP000627">
    <property type="protein sequence ID" value="ABQ21489.1"/>
    <property type="molecule type" value="Genomic_DNA"/>
</dbReference>
<dbReference type="EMBL" id="CP001235">
    <property type="protein sequence ID" value="ACP10332.1"/>
    <property type="molecule type" value="Genomic_DNA"/>
</dbReference>
<dbReference type="RefSeq" id="WP_000016423.1">
    <property type="nucleotide sequence ID" value="NZ_JAACZH010000022.1"/>
</dbReference>
<dbReference type="SMR" id="A5F643"/>
<dbReference type="GeneID" id="89513785"/>
<dbReference type="KEGG" id="vco:VC0395_A1819"/>
<dbReference type="KEGG" id="vcr:VC395_2342"/>
<dbReference type="PATRIC" id="fig|345073.21.peg.2258"/>
<dbReference type="eggNOG" id="COG0150">
    <property type="taxonomic scope" value="Bacteria"/>
</dbReference>
<dbReference type="HOGENOM" id="CLU_047116_0_0_6"/>
<dbReference type="OrthoDB" id="9777881at2"/>
<dbReference type="UniPathway" id="UPA00074">
    <property type="reaction ID" value="UER00129"/>
</dbReference>
<dbReference type="Proteomes" id="UP000000249">
    <property type="component" value="Chromosome 2"/>
</dbReference>
<dbReference type="GO" id="GO:0005829">
    <property type="term" value="C:cytosol"/>
    <property type="evidence" value="ECO:0007669"/>
    <property type="project" value="TreeGrafter"/>
</dbReference>
<dbReference type="GO" id="GO:0005524">
    <property type="term" value="F:ATP binding"/>
    <property type="evidence" value="ECO:0007669"/>
    <property type="project" value="UniProtKB-KW"/>
</dbReference>
<dbReference type="GO" id="GO:0004637">
    <property type="term" value="F:phosphoribosylamine-glycine ligase activity"/>
    <property type="evidence" value="ECO:0007669"/>
    <property type="project" value="TreeGrafter"/>
</dbReference>
<dbReference type="GO" id="GO:0004641">
    <property type="term" value="F:phosphoribosylformylglycinamidine cyclo-ligase activity"/>
    <property type="evidence" value="ECO:0007669"/>
    <property type="project" value="UniProtKB-UniRule"/>
</dbReference>
<dbReference type="GO" id="GO:0006189">
    <property type="term" value="P:'de novo' IMP biosynthetic process"/>
    <property type="evidence" value="ECO:0007669"/>
    <property type="project" value="UniProtKB-UniRule"/>
</dbReference>
<dbReference type="GO" id="GO:0046084">
    <property type="term" value="P:adenine biosynthetic process"/>
    <property type="evidence" value="ECO:0007669"/>
    <property type="project" value="TreeGrafter"/>
</dbReference>
<dbReference type="CDD" id="cd02196">
    <property type="entry name" value="PurM"/>
    <property type="match status" value="1"/>
</dbReference>
<dbReference type="FunFam" id="3.30.1330.10:FF:000001">
    <property type="entry name" value="Phosphoribosylformylglycinamidine cyclo-ligase"/>
    <property type="match status" value="1"/>
</dbReference>
<dbReference type="FunFam" id="3.90.650.10:FF:000001">
    <property type="entry name" value="Phosphoribosylformylglycinamidine cyclo-ligase"/>
    <property type="match status" value="1"/>
</dbReference>
<dbReference type="Gene3D" id="3.90.650.10">
    <property type="entry name" value="PurM-like C-terminal domain"/>
    <property type="match status" value="1"/>
</dbReference>
<dbReference type="Gene3D" id="3.30.1330.10">
    <property type="entry name" value="PurM-like, N-terminal domain"/>
    <property type="match status" value="1"/>
</dbReference>
<dbReference type="HAMAP" id="MF_00741">
    <property type="entry name" value="AIRS"/>
    <property type="match status" value="1"/>
</dbReference>
<dbReference type="InterPro" id="IPR010918">
    <property type="entry name" value="PurM-like_C_dom"/>
</dbReference>
<dbReference type="InterPro" id="IPR036676">
    <property type="entry name" value="PurM-like_C_sf"/>
</dbReference>
<dbReference type="InterPro" id="IPR016188">
    <property type="entry name" value="PurM-like_N"/>
</dbReference>
<dbReference type="InterPro" id="IPR036921">
    <property type="entry name" value="PurM-like_N_sf"/>
</dbReference>
<dbReference type="InterPro" id="IPR004733">
    <property type="entry name" value="PurM_cligase"/>
</dbReference>
<dbReference type="NCBIfam" id="TIGR00878">
    <property type="entry name" value="purM"/>
    <property type="match status" value="1"/>
</dbReference>
<dbReference type="PANTHER" id="PTHR10520:SF12">
    <property type="entry name" value="TRIFUNCTIONAL PURINE BIOSYNTHETIC PROTEIN ADENOSINE-3"/>
    <property type="match status" value="1"/>
</dbReference>
<dbReference type="PANTHER" id="PTHR10520">
    <property type="entry name" value="TRIFUNCTIONAL PURINE BIOSYNTHETIC PROTEIN ADENOSINE-3-RELATED"/>
    <property type="match status" value="1"/>
</dbReference>
<dbReference type="Pfam" id="PF00586">
    <property type="entry name" value="AIRS"/>
    <property type="match status" value="1"/>
</dbReference>
<dbReference type="Pfam" id="PF02769">
    <property type="entry name" value="AIRS_C"/>
    <property type="match status" value="1"/>
</dbReference>
<dbReference type="SUPFAM" id="SSF56042">
    <property type="entry name" value="PurM C-terminal domain-like"/>
    <property type="match status" value="1"/>
</dbReference>
<dbReference type="SUPFAM" id="SSF55326">
    <property type="entry name" value="PurM N-terminal domain-like"/>
    <property type="match status" value="1"/>
</dbReference>
<proteinExistence type="inferred from homology"/>
<accession>A5F643</accession>
<accession>C3M3I3</accession>
<evidence type="ECO:0000255" key="1">
    <source>
        <dbReference type="HAMAP-Rule" id="MF_00741"/>
    </source>
</evidence>
<reference key="1">
    <citation type="submission" date="2007-03" db="EMBL/GenBank/DDBJ databases">
        <authorList>
            <person name="Heidelberg J."/>
        </authorList>
    </citation>
    <scope>NUCLEOTIDE SEQUENCE [LARGE SCALE GENOMIC DNA]</scope>
    <source>
        <strain>ATCC 39541 / Classical Ogawa 395 / O395</strain>
    </source>
</reference>
<reference key="2">
    <citation type="journal article" date="2008" name="PLoS ONE">
        <title>A recalibrated molecular clock and independent origins for the cholera pandemic clones.</title>
        <authorList>
            <person name="Feng L."/>
            <person name="Reeves P.R."/>
            <person name="Lan R."/>
            <person name="Ren Y."/>
            <person name="Gao C."/>
            <person name="Zhou Z."/>
            <person name="Ren Y."/>
            <person name="Cheng J."/>
            <person name="Wang W."/>
            <person name="Wang J."/>
            <person name="Qian W."/>
            <person name="Li D."/>
            <person name="Wang L."/>
        </authorList>
    </citation>
    <scope>NUCLEOTIDE SEQUENCE [LARGE SCALE GENOMIC DNA]</scope>
    <source>
        <strain>ATCC 39541 / Classical Ogawa 395 / O395</strain>
    </source>
</reference>
<name>PUR5_VIBC3</name>
<comment type="catalytic activity">
    <reaction evidence="1">
        <text>2-formamido-N(1)-(5-O-phospho-beta-D-ribosyl)acetamidine + ATP = 5-amino-1-(5-phospho-beta-D-ribosyl)imidazole + ADP + phosphate + H(+)</text>
        <dbReference type="Rhea" id="RHEA:23032"/>
        <dbReference type="ChEBI" id="CHEBI:15378"/>
        <dbReference type="ChEBI" id="CHEBI:30616"/>
        <dbReference type="ChEBI" id="CHEBI:43474"/>
        <dbReference type="ChEBI" id="CHEBI:137981"/>
        <dbReference type="ChEBI" id="CHEBI:147287"/>
        <dbReference type="ChEBI" id="CHEBI:456216"/>
        <dbReference type="EC" id="6.3.3.1"/>
    </reaction>
</comment>
<comment type="pathway">
    <text evidence="1">Purine metabolism; IMP biosynthesis via de novo pathway; 5-amino-1-(5-phospho-D-ribosyl)imidazole from N(2)-formyl-N(1)-(5-phospho-D-ribosyl)glycinamide: step 2/2.</text>
</comment>
<comment type="subcellular location">
    <subcellularLocation>
        <location evidence="1">Cytoplasm</location>
    </subcellularLocation>
</comment>
<comment type="similarity">
    <text evidence="1">Belongs to the AIR synthase family.</text>
</comment>
<protein>
    <recommendedName>
        <fullName evidence="1">Phosphoribosylformylglycinamidine cyclo-ligase</fullName>
        <ecNumber evidence="1">6.3.3.1</ecNumber>
    </recommendedName>
    <alternativeName>
        <fullName evidence="1">AIR synthase</fullName>
    </alternativeName>
    <alternativeName>
        <fullName evidence="1">AIRS</fullName>
    </alternativeName>
    <alternativeName>
        <fullName evidence="1">Phosphoribosyl-aminoimidazole synthetase</fullName>
    </alternativeName>
</protein>
<organism>
    <name type="scientific">Vibrio cholerae serotype O1 (strain ATCC 39541 / Classical Ogawa 395 / O395)</name>
    <dbReference type="NCBI Taxonomy" id="345073"/>
    <lineage>
        <taxon>Bacteria</taxon>
        <taxon>Pseudomonadati</taxon>
        <taxon>Pseudomonadota</taxon>
        <taxon>Gammaproteobacteria</taxon>
        <taxon>Vibrionales</taxon>
        <taxon>Vibrionaceae</taxon>
        <taxon>Vibrio</taxon>
    </lineage>
</organism>
<keyword id="KW-0067">ATP-binding</keyword>
<keyword id="KW-0963">Cytoplasm</keyword>
<keyword id="KW-0436">Ligase</keyword>
<keyword id="KW-0547">Nucleotide-binding</keyword>
<keyword id="KW-0658">Purine biosynthesis</keyword>
<feature type="chain" id="PRO_1000072817" description="Phosphoribosylformylglycinamidine cyclo-ligase">
    <location>
        <begin position="1"/>
        <end position="346"/>
    </location>
</feature>
<sequence length="346" mass="36773">MSGNNPSLSYKDAGVDIDAGNALVERIKGAVKRTRRPEVMGGLGGFGALCELPTKYKHPVLVSGTDGVGTKLRLALDMKKHDTIGIDLVAMCVNDLIVQGAEPLFFLDYYATGKLDVDTAAEVISGIADGCLQAGCALIGGETAEMPGMYEGEDYDVAGFCVGVVEKEEIIDGSKVQVGDALIAVGSSGPHSNGYSLVRKILEVSKADKNERLAGKTIGEHLLAPTKIYIKSGLKLIAEHDIHAISHITGGGFWENIPRVLPEGTKAVIDGKSWEWPVIFQWLQEKGNVTTHEMYRTFNCGVGLIIALPKDQANAAVALLQAEGETAWVIGEIAAANSNEAQVEIN</sequence>
<gene>
    <name evidence="1" type="primary">purM</name>
    <name type="ordered locus">VC0395_A1819</name>
    <name type="ordered locus">VC395_2342</name>
</gene>